<organism>
    <name type="scientific">Mycobacterium tuberculosis (strain ATCC 25618 / H37Rv)</name>
    <dbReference type="NCBI Taxonomy" id="83332"/>
    <lineage>
        <taxon>Bacteria</taxon>
        <taxon>Bacillati</taxon>
        <taxon>Actinomycetota</taxon>
        <taxon>Actinomycetes</taxon>
        <taxon>Mycobacteriales</taxon>
        <taxon>Mycobacteriaceae</taxon>
        <taxon>Mycobacterium</taxon>
        <taxon>Mycobacterium tuberculosis complex</taxon>
    </lineage>
</organism>
<proteinExistence type="evidence at protein level"/>
<protein>
    <recommendedName>
        <fullName evidence="1">Bifunctional protein FolD</fullName>
    </recommendedName>
    <domain>
        <recommendedName>
            <fullName evidence="1">Methylenetetrahydrofolate dehydrogenase</fullName>
            <ecNumber evidence="1">1.5.1.5</ecNumber>
        </recommendedName>
    </domain>
    <domain>
        <recommendedName>
            <fullName evidence="1">Methenyltetrahydrofolate cyclohydrolase</fullName>
            <ecNumber evidence="1">3.5.4.9</ecNumber>
        </recommendedName>
    </domain>
</protein>
<reference key="1">
    <citation type="journal article" date="1998" name="Nature">
        <title>Deciphering the biology of Mycobacterium tuberculosis from the complete genome sequence.</title>
        <authorList>
            <person name="Cole S.T."/>
            <person name="Brosch R."/>
            <person name="Parkhill J."/>
            <person name="Garnier T."/>
            <person name="Churcher C.M."/>
            <person name="Harris D.E."/>
            <person name="Gordon S.V."/>
            <person name="Eiglmeier K."/>
            <person name="Gas S."/>
            <person name="Barry C.E. III"/>
            <person name="Tekaia F."/>
            <person name="Badcock K."/>
            <person name="Basham D."/>
            <person name="Brown D."/>
            <person name="Chillingworth T."/>
            <person name="Connor R."/>
            <person name="Davies R.M."/>
            <person name="Devlin K."/>
            <person name="Feltwell T."/>
            <person name="Gentles S."/>
            <person name="Hamlin N."/>
            <person name="Holroyd S."/>
            <person name="Hornsby T."/>
            <person name="Jagels K."/>
            <person name="Krogh A."/>
            <person name="McLean J."/>
            <person name="Moule S."/>
            <person name="Murphy L.D."/>
            <person name="Oliver S."/>
            <person name="Osborne J."/>
            <person name="Quail M.A."/>
            <person name="Rajandream M.A."/>
            <person name="Rogers J."/>
            <person name="Rutter S."/>
            <person name="Seeger K."/>
            <person name="Skelton S."/>
            <person name="Squares S."/>
            <person name="Squares R."/>
            <person name="Sulston J.E."/>
            <person name="Taylor K."/>
            <person name="Whitehead S."/>
            <person name="Barrell B.G."/>
        </authorList>
    </citation>
    <scope>NUCLEOTIDE SEQUENCE [LARGE SCALE GENOMIC DNA]</scope>
    <source>
        <strain>ATCC 25618 / H37Rv</strain>
    </source>
</reference>
<reference key="2">
    <citation type="journal article" date="2011" name="Mol. Cell. Proteomics">
        <title>Proteogenomic analysis of Mycobacterium tuberculosis by high resolution mass spectrometry.</title>
        <authorList>
            <person name="Kelkar D.S."/>
            <person name="Kumar D."/>
            <person name="Kumar P."/>
            <person name="Balakrishnan L."/>
            <person name="Muthusamy B."/>
            <person name="Yadav A.K."/>
            <person name="Shrivastava P."/>
            <person name="Marimuthu A."/>
            <person name="Anand S."/>
            <person name="Sundaram H."/>
            <person name="Kingsbury R."/>
            <person name="Harsha H.C."/>
            <person name="Nair B."/>
            <person name="Prasad T.S."/>
            <person name="Chauhan D.S."/>
            <person name="Katoch K."/>
            <person name="Katoch V.M."/>
            <person name="Kumar P."/>
            <person name="Chaerkady R."/>
            <person name="Ramachandran S."/>
            <person name="Dash D."/>
            <person name="Pandey A."/>
        </authorList>
    </citation>
    <scope>IDENTIFICATION BY MASS SPECTROMETRY [LARGE SCALE ANALYSIS]</scope>
    <source>
        <strain>ATCC 25618 / H37Rv</strain>
    </source>
</reference>
<reference key="3">
    <citation type="submission" date="2011-07" db="PDB data bank">
        <title>Three dimensional structure of bifunctional methylenetetrahydrofolate dehydrogenase-cyclohydrolase from Mycobacterium tuberculosis.</title>
        <authorList>
            <consortium name="Mycobacterium tuberculosis structural genomics consortium (TB)"/>
        </authorList>
    </citation>
    <scope>X-RAY CRYSTALLOGRAPHY (2.0 ANGSTROMS)</scope>
    <scope>SUBUNIT</scope>
</reference>
<gene>
    <name evidence="1" type="primary">folD</name>
    <name type="ordered locus">Rv3356c</name>
</gene>
<comment type="function">
    <text evidence="1">Catalyzes the oxidation of 5,10-methylenetetrahydrofolate to 5,10-methenyltetrahydrofolate and then the hydrolysis of 5,10-methenyltetrahydrofolate to 10-formyltetrahydrofolate.</text>
</comment>
<comment type="catalytic activity">
    <reaction evidence="1">
        <text>(6R)-5,10-methylene-5,6,7,8-tetrahydrofolate + NADP(+) = (6R)-5,10-methenyltetrahydrofolate + NADPH</text>
        <dbReference type="Rhea" id="RHEA:22812"/>
        <dbReference type="ChEBI" id="CHEBI:15636"/>
        <dbReference type="ChEBI" id="CHEBI:57455"/>
        <dbReference type="ChEBI" id="CHEBI:57783"/>
        <dbReference type="ChEBI" id="CHEBI:58349"/>
        <dbReference type="EC" id="1.5.1.5"/>
    </reaction>
</comment>
<comment type="catalytic activity">
    <reaction evidence="1">
        <text>(6R)-5,10-methenyltetrahydrofolate + H2O = (6R)-10-formyltetrahydrofolate + H(+)</text>
        <dbReference type="Rhea" id="RHEA:23700"/>
        <dbReference type="ChEBI" id="CHEBI:15377"/>
        <dbReference type="ChEBI" id="CHEBI:15378"/>
        <dbReference type="ChEBI" id="CHEBI:57455"/>
        <dbReference type="ChEBI" id="CHEBI:195366"/>
        <dbReference type="EC" id="3.5.4.9"/>
    </reaction>
</comment>
<comment type="pathway">
    <text evidence="1">One-carbon metabolism; tetrahydrofolate interconversion.</text>
</comment>
<comment type="subunit">
    <text evidence="2">Homodimer.</text>
</comment>
<comment type="similarity">
    <text evidence="1">Belongs to the tetrahydrofolate dehydrogenase/cyclohydrolase family.</text>
</comment>
<sequence>MGAIMLDGKATRDEIFGDLKQRVAALDAAGRTPGLGTILVGDDPGSQAYVRGKHADCAKVGITSIRRDLPADISTATLNETIDELNANPDCTGYIVQLPLPKHLDENAALERVDPAKDADGLHPTNLGRLVLGTPAPLPCTPRGIVHLLRRYDISIAGAHVVVIGRGVTVGRPLGLLLTRRSENATVTLCHTGTRDLPALTRQADIVVAAVGVAHLLTADMVRPGAAVIDVGVSRTDDGLVGDVHPDVWELAGHVSPNPGGVGPLTRAFLLTNVVELAERR</sequence>
<dbReference type="EC" id="1.5.1.5" evidence="1"/>
<dbReference type="EC" id="3.5.4.9" evidence="1"/>
<dbReference type="EMBL" id="AL123456">
    <property type="protein sequence ID" value="CCP46177.1"/>
    <property type="molecule type" value="Genomic_DNA"/>
</dbReference>
<dbReference type="PIR" id="C70970">
    <property type="entry name" value="C70970"/>
</dbReference>
<dbReference type="RefSeq" id="NP_217873.1">
    <property type="nucleotide sequence ID" value="NC_000962.3"/>
</dbReference>
<dbReference type="RefSeq" id="WP_003417751.1">
    <property type="nucleotide sequence ID" value="NZ_NVQJ01000052.1"/>
</dbReference>
<dbReference type="PDB" id="2C2X">
    <property type="method" value="X-ray"/>
    <property type="resolution" value="2.00 A"/>
    <property type="chains" value="A/B=2-281"/>
</dbReference>
<dbReference type="PDB" id="2C2Y">
    <property type="method" value="X-ray"/>
    <property type="resolution" value="2.30 A"/>
    <property type="chains" value="A=2-281"/>
</dbReference>
<dbReference type="PDBsum" id="2C2X"/>
<dbReference type="PDBsum" id="2C2Y"/>
<dbReference type="SMR" id="P9WG81"/>
<dbReference type="FunCoup" id="P9WG81">
    <property type="interactions" value="459"/>
</dbReference>
<dbReference type="STRING" id="83332.Rv3356c"/>
<dbReference type="PaxDb" id="83332-Rv3356c"/>
<dbReference type="DNASU" id="888145"/>
<dbReference type="GeneID" id="888145"/>
<dbReference type="KEGG" id="mtu:Rv3356c"/>
<dbReference type="KEGG" id="mtv:RVBD_3356c"/>
<dbReference type="TubercuList" id="Rv3356c"/>
<dbReference type="eggNOG" id="COG0190">
    <property type="taxonomic scope" value="Bacteria"/>
</dbReference>
<dbReference type="InParanoid" id="P9WG81"/>
<dbReference type="OrthoDB" id="9803580at2"/>
<dbReference type="PhylomeDB" id="P9WG81"/>
<dbReference type="UniPathway" id="UPA00193"/>
<dbReference type="EvolutionaryTrace" id="P9WG81"/>
<dbReference type="Proteomes" id="UP000001584">
    <property type="component" value="Chromosome"/>
</dbReference>
<dbReference type="GO" id="GO:0005829">
    <property type="term" value="C:cytosol"/>
    <property type="evidence" value="ECO:0000318"/>
    <property type="project" value="GO_Central"/>
</dbReference>
<dbReference type="GO" id="GO:0005576">
    <property type="term" value="C:extracellular region"/>
    <property type="evidence" value="ECO:0007005"/>
    <property type="project" value="MTBBASE"/>
</dbReference>
<dbReference type="GO" id="GO:0005886">
    <property type="term" value="C:plasma membrane"/>
    <property type="evidence" value="ECO:0007005"/>
    <property type="project" value="MTBBASE"/>
</dbReference>
<dbReference type="GO" id="GO:0004477">
    <property type="term" value="F:methenyltetrahydrofolate cyclohydrolase activity"/>
    <property type="evidence" value="ECO:0000318"/>
    <property type="project" value="GO_Central"/>
</dbReference>
<dbReference type="GO" id="GO:0004488">
    <property type="term" value="F:methylenetetrahydrofolate dehydrogenase (NADP+) activity"/>
    <property type="evidence" value="ECO:0000318"/>
    <property type="project" value="GO_Central"/>
</dbReference>
<dbReference type="GO" id="GO:0000105">
    <property type="term" value="P:L-histidine biosynthetic process"/>
    <property type="evidence" value="ECO:0007669"/>
    <property type="project" value="UniProtKB-KW"/>
</dbReference>
<dbReference type="GO" id="GO:0009086">
    <property type="term" value="P:methionine biosynthetic process"/>
    <property type="evidence" value="ECO:0007669"/>
    <property type="project" value="UniProtKB-KW"/>
</dbReference>
<dbReference type="GO" id="GO:0006164">
    <property type="term" value="P:purine nucleotide biosynthetic process"/>
    <property type="evidence" value="ECO:0007669"/>
    <property type="project" value="UniProtKB-KW"/>
</dbReference>
<dbReference type="GO" id="GO:0035999">
    <property type="term" value="P:tetrahydrofolate interconversion"/>
    <property type="evidence" value="ECO:0000318"/>
    <property type="project" value="GO_Central"/>
</dbReference>
<dbReference type="CDD" id="cd01080">
    <property type="entry name" value="NAD_bind_m-THF_DH_Cyclohyd"/>
    <property type="match status" value="1"/>
</dbReference>
<dbReference type="FunFam" id="3.40.50.720:FF:000094">
    <property type="entry name" value="Bifunctional protein FolD"/>
    <property type="match status" value="1"/>
</dbReference>
<dbReference type="FunFam" id="3.40.50.10860:FF:000005">
    <property type="entry name" value="C-1-tetrahydrofolate synthase, cytoplasmic, putative"/>
    <property type="match status" value="1"/>
</dbReference>
<dbReference type="Gene3D" id="3.40.50.10860">
    <property type="entry name" value="Leucine Dehydrogenase, chain A, domain 1"/>
    <property type="match status" value="1"/>
</dbReference>
<dbReference type="Gene3D" id="3.40.50.720">
    <property type="entry name" value="NAD(P)-binding Rossmann-like Domain"/>
    <property type="match status" value="1"/>
</dbReference>
<dbReference type="HAMAP" id="MF_01576">
    <property type="entry name" value="THF_DHG_CYH"/>
    <property type="match status" value="1"/>
</dbReference>
<dbReference type="InterPro" id="IPR046346">
    <property type="entry name" value="Aminoacid_DH-like_N_sf"/>
</dbReference>
<dbReference type="InterPro" id="IPR036291">
    <property type="entry name" value="NAD(P)-bd_dom_sf"/>
</dbReference>
<dbReference type="InterPro" id="IPR000672">
    <property type="entry name" value="THF_DH/CycHdrlase"/>
</dbReference>
<dbReference type="InterPro" id="IPR020630">
    <property type="entry name" value="THF_DH/CycHdrlase_cat_dom"/>
</dbReference>
<dbReference type="InterPro" id="IPR020631">
    <property type="entry name" value="THF_DH/CycHdrlase_NAD-bd_dom"/>
</dbReference>
<dbReference type="NCBIfam" id="NF010789">
    <property type="entry name" value="PRK14193.1"/>
    <property type="match status" value="1"/>
</dbReference>
<dbReference type="PANTHER" id="PTHR48099:SF5">
    <property type="entry name" value="C-1-TETRAHYDROFOLATE SYNTHASE, CYTOPLASMIC"/>
    <property type="match status" value="1"/>
</dbReference>
<dbReference type="PANTHER" id="PTHR48099">
    <property type="entry name" value="C-1-TETRAHYDROFOLATE SYNTHASE, CYTOPLASMIC-RELATED"/>
    <property type="match status" value="1"/>
</dbReference>
<dbReference type="Pfam" id="PF00763">
    <property type="entry name" value="THF_DHG_CYH"/>
    <property type="match status" value="1"/>
</dbReference>
<dbReference type="Pfam" id="PF02882">
    <property type="entry name" value="THF_DHG_CYH_C"/>
    <property type="match status" value="1"/>
</dbReference>
<dbReference type="PRINTS" id="PR00085">
    <property type="entry name" value="THFDHDRGNASE"/>
</dbReference>
<dbReference type="SUPFAM" id="SSF53223">
    <property type="entry name" value="Aminoacid dehydrogenase-like, N-terminal domain"/>
    <property type="match status" value="1"/>
</dbReference>
<dbReference type="SUPFAM" id="SSF51735">
    <property type="entry name" value="NAD(P)-binding Rossmann-fold domains"/>
    <property type="match status" value="1"/>
</dbReference>
<name>FOLD_MYCTU</name>
<evidence type="ECO:0000255" key="1">
    <source>
        <dbReference type="HAMAP-Rule" id="MF_01576"/>
    </source>
</evidence>
<evidence type="ECO:0000305" key="2">
    <source ref="3"/>
</evidence>
<evidence type="ECO:0007829" key="3">
    <source>
        <dbReference type="PDB" id="2C2X"/>
    </source>
</evidence>
<accession>P9WG81</accession>
<accession>L0TDW6</accession>
<accession>O50385</accession>
<accession>Q7D5N0</accession>
<keyword id="KW-0002">3D-structure</keyword>
<keyword id="KW-0028">Amino-acid biosynthesis</keyword>
<keyword id="KW-0368">Histidine biosynthesis</keyword>
<keyword id="KW-0378">Hydrolase</keyword>
<keyword id="KW-0486">Methionine biosynthesis</keyword>
<keyword id="KW-0511">Multifunctional enzyme</keyword>
<keyword id="KW-0521">NADP</keyword>
<keyword id="KW-0554">One-carbon metabolism</keyword>
<keyword id="KW-0560">Oxidoreductase</keyword>
<keyword id="KW-0658">Purine biosynthesis</keyword>
<keyword id="KW-1185">Reference proteome</keyword>
<feature type="chain" id="PRO_0000268404" description="Bifunctional protein FolD">
    <location>
        <begin position="1"/>
        <end position="281"/>
    </location>
</feature>
<feature type="binding site" evidence="1">
    <location>
        <begin position="165"/>
        <end position="167"/>
    </location>
    <ligand>
        <name>NADP(+)</name>
        <dbReference type="ChEBI" id="CHEBI:58349"/>
    </ligand>
</feature>
<feature type="binding site" evidence="1">
    <location>
        <position position="192"/>
    </location>
    <ligand>
        <name>NADP(+)</name>
        <dbReference type="ChEBI" id="CHEBI:58349"/>
    </ligand>
</feature>
<feature type="binding site" evidence="1">
    <location>
        <position position="233"/>
    </location>
    <ligand>
        <name>NADP(+)</name>
        <dbReference type="ChEBI" id="CHEBI:58349"/>
    </ligand>
</feature>
<feature type="helix" evidence="3">
    <location>
        <begin position="8"/>
        <end position="28"/>
    </location>
</feature>
<feature type="strand" evidence="3">
    <location>
        <begin position="34"/>
        <end position="41"/>
    </location>
</feature>
<feature type="helix" evidence="3">
    <location>
        <begin position="44"/>
        <end position="60"/>
    </location>
</feature>
<feature type="strand" evidence="3">
    <location>
        <begin position="63"/>
        <end position="69"/>
    </location>
</feature>
<feature type="helix" evidence="3">
    <location>
        <begin position="75"/>
        <end position="87"/>
    </location>
</feature>
<feature type="strand" evidence="3">
    <location>
        <begin position="93"/>
        <end position="96"/>
    </location>
</feature>
<feature type="helix" evidence="3">
    <location>
        <begin position="106"/>
        <end position="112"/>
    </location>
</feature>
<feature type="helix" evidence="3">
    <location>
        <begin position="115"/>
        <end position="117"/>
    </location>
</feature>
<feature type="helix" evidence="3">
    <location>
        <begin position="124"/>
        <end position="132"/>
    </location>
</feature>
<feature type="helix" evidence="3">
    <location>
        <begin position="140"/>
        <end position="151"/>
    </location>
</feature>
<feature type="strand" evidence="3">
    <location>
        <begin position="160"/>
        <end position="164"/>
    </location>
</feature>
<feature type="turn" evidence="3">
    <location>
        <begin position="168"/>
        <end position="170"/>
    </location>
</feature>
<feature type="helix" evidence="3">
    <location>
        <begin position="171"/>
        <end position="178"/>
    </location>
</feature>
<feature type="turn" evidence="3">
    <location>
        <begin position="181"/>
        <end position="183"/>
    </location>
</feature>
<feature type="strand" evidence="3">
    <location>
        <begin position="186"/>
        <end position="190"/>
    </location>
</feature>
<feature type="helix" evidence="3">
    <location>
        <begin position="197"/>
        <end position="201"/>
    </location>
</feature>
<feature type="strand" evidence="3">
    <location>
        <begin position="205"/>
        <end position="209"/>
    </location>
</feature>
<feature type="helix" evidence="3">
    <location>
        <begin position="219"/>
        <end position="221"/>
    </location>
</feature>
<feature type="strand" evidence="3">
    <location>
        <begin position="227"/>
        <end position="230"/>
    </location>
</feature>
<feature type="strand" evidence="3">
    <location>
        <begin position="233"/>
        <end position="236"/>
    </location>
</feature>
<feature type="strand" evidence="3">
    <location>
        <begin position="239"/>
        <end position="244"/>
    </location>
</feature>
<feature type="helix" evidence="3">
    <location>
        <begin position="246"/>
        <end position="250"/>
    </location>
</feature>
<feature type="strand" evidence="3">
    <location>
        <begin position="253"/>
        <end position="256"/>
    </location>
</feature>
<feature type="strand" evidence="3">
    <location>
        <begin position="258"/>
        <end position="262"/>
    </location>
</feature>
<feature type="helix" evidence="3">
    <location>
        <begin position="263"/>
        <end position="280"/>
    </location>
</feature>